<organism>
    <name type="scientific">Arabidopsis thaliana</name>
    <name type="common">Mouse-ear cress</name>
    <dbReference type="NCBI Taxonomy" id="3702"/>
    <lineage>
        <taxon>Eukaryota</taxon>
        <taxon>Viridiplantae</taxon>
        <taxon>Streptophyta</taxon>
        <taxon>Embryophyta</taxon>
        <taxon>Tracheophyta</taxon>
        <taxon>Spermatophyta</taxon>
        <taxon>Magnoliopsida</taxon>
        <taxon>eudicotyledons</taxon>
        <taxon>Gunneridae</taxon>
        <taxon>Pentapetalae</taxon>
        <taxon>rosids</taxon>
        <taxon>malvids</taxon>
        <taxon>Brassicales</taxon>
        <taxon>Brassicaceae</taxon>
        <taxon>Camelineae</taxon>
        <taxon>Arabidopsis</taxon>
    </lineage>
</organism>
<keyword id="KW-0150">Chloroplast</keyword>
<keyword id="KW-0507">mRNA processing</keyword>
<keyword id="KW-0934">Plastid</keyword>
<keyword id="KW-1185">Reference proteome</keyword>
<keyword id="KW-0677">Repeat</keyword>
<keyword id="KW-0687">Ribonucleoprotein</keyword>
<keyword id="KW-0691">RNA editing</keyword>
<keyword id="KW-0694">RNA-binding</keyword>
<keyword id="KW-0809">Transit peptide</keyword>
<accession>Q9FGS0</accession>
<evidence type="ECO:0000255" key="1"/>
<evidence type="ECO:0000255" key="2">
    <source>
        <dbReference type="PROSITE-ProRule" id="PRU00176"/>
    </source>
</evidence>
<evidence type="ECO:0000269" key="3">
    <source>
    </source>
</evidence>
<evidence type="ECO:0000269" key="4">
    <source>
    </source>
</evidence>
<evidence type="ECO:0000303" key="5">
    <source>
    </source>
</evidence>
<evidence type="ECO:0000305" key="6"/>
<evidence type="ECO:0000312" key="7">
    <source>
        <dbReference type="Araport" id="AT5G50250"/>
    </source>
</evidence>
<evidence type="ECO:0000312" key="8">
    <source>
        <dbReference type="EMBL" id="BAB09396.1"/>
    </source>
</evidence>
<name>CP31B_ARATH</name>
<dbReference type="EMBL" id="AB024031">
    <property type="protein sequence ID" value="BAB09396.1"/>
    <property type="molecule type" value="Genomic_DNA"/>
</dbReference>
<dbReference type="EMBL" id="CP002688">
    <property type="protein sequence ID" value="AED95918.1"/>
    <property type="molecule type" value="Genomic_DNA"/>
</dbReference>
<dbReference type="EMBL" id="AY039868">
    <property type="protein sequence ID" value="AAK63972.1"/>
    <property type="molecule type" value="mRNA"/>
</dbReference>
<dbReference type="EMBL" id="AY077660">
    <property type="protein sequence ID" value="AAL76138.1"/>
    <property type="molecule type" value="mRNA"/>
</dbReference>
<dbReference type="RefSeq" id="NP_199836.1">
    <property type="nucleotide sequence ID" value="NM_124404.4"/>
</dbReference>
<dbReference type="SMR" id="Q9FGS0"/>
<dbReference type="FunCoup" id="Q9FGS0">
    <property type="interactions" value="2024"/>
</dbReference>
<dbReference type="STRING" id="3702.Q9FGS0"/>
<dbReference type="PaxDb" id="3702-AT5G50250.1"/>
<dbReference type="ProteomicsDB" id="220440"/>
<dbReference type="EnsemblPlants" id="AT5G50250.1">
    <property type="protein sequence ID" value="AT5G50250.1"/>
    <property type="gene ID" value="AT5G50250"/>
</dbReference>
<dbReference type="GeneID" id="835090"/>
<dbReference type="Gramene" id="AT5G50250.1">
    <property type="protein sequence ID" value="AT5G50250.1"/>
    <property type="gene ID" value="AT5G50250"/>
</dbReference>
<dbReference type="KEGG" id="ath:AT5G50250"/>
<dbReference type="Araport" id="AT5G50250"/>
<dbReference type="TAIR" id="AT5G50250">
    <property type="gene designation" value="CP31B"/>
</dbReference>
<dbReference type="eggNOG" id="KOG0118">
    <property type="taxonomic scope" value="Eukaryota"/>
</dbReference>
<dbReference type="HOGENOM" id="CLU_012062_15_1_1"/>
<dbReference type="InParanoid" id="Q9FGS0"/>
<dbReference type="OMA" id="TSDWEGE"/>
<dbReference type="PhylomeDB" id="Q9FGS0"/>
<dbReference type="PRO" id="PR:Q9FGS0"/>
<dbReference type="Proteomes" id="UP000006548">
    <property type="component" value="Chromosome 5"/>
</dbReference>
<dbReference type="ExpressionAtlas" id="Q9FGS0">
    <property type="expression patterns" value="baseline and differential"/>
</dbReference>
<dbReference type="GO" id="GO:0009507">
    <property type="term" value="C:chloroplast"/>
    <property type="evidence" value="ECO:0007005"/>
    <property type="project" value="TAIR"/>
</dbReference>
<dbReference type="GO" id="GO:0009941">
    <property type="term" value="C:chloroplast envelope"/>
    <property type="evidence" value="ECO:0007005"/>
    <property type="project" value="TAIR"/>
</dbReference>
<dbReference type="GO" id="GO:0009570">
    <property type="term" value="C:chloroplast stroma"/>
    <property type="evidence" value="ECO:0007005"/>
    <property type="project" value="TAIR"/>
</dbReference>
<dbReference type="GO" id="GO:0009536">
    <property type="term" value="C:plastid"/>
    <property type="evidence" value="ECO:0007005"/>
    <property type="project" value="TAIR"/>
</dbReference>
<dbReference type="GO" id="GO:1990904">
    <property type="term" value="C:ribonucleoprotein complex"/>
    <property type="evidence" value="ECO:0007669"/>
    <property type="project" value="UniProtKB-KW"/>
</dbReference>
<dbReference type="GO" id="GO:0003729">
    <property type="term" value="F:mRNA binding"/>
    <property type="evidence" value="ECO:0000314"/>
    <property type="project" value="TAIR"/>
</dbReference>
<dbReference type="GO" id="GO:0008266">
    <property type="term" value="F:poly(U) RNA binding"/>
    <property type="evidence" value="ECO:0000314"/>
    <property type="project" value="TAIR"/>
</dbReference>
<dbReference type="GO" id="GO:0045087">
    <property type="term" value="P:innate immune response"/>
    <property type="evidence" value="ECO:0000314"/>
    <property type="project" value="TAIR"/>
</dbReference>
<dbReference type="GO" id="GO:0006397">
    <property type="term" value="P:mRNA processing"/>
    <property type="evidence" value="ECO:0007669"/>
    <property type="project" value="UniProtKB-KW"/>
</dbReference>
<dbReference type="GO" id="GO:0009451">
    <property type="term" value="P:RNA modification"/>
    <property type="evidence" value="ECO:0000315"/>
    <property type="project" value="TAIR"/>
</dbReference>
<dbReference type="CDD" id="cd21608">
    <property type="entry name" value="RRM2_NsCP33_like"/>
    <property type="match status" value="1"/>
</dbReference>
<dbReference type="FunFam" id="3.30.70.330:FF:000268">
    <property type="entry name" value="31 kDa ribonucleoprotein, chloroplastic"/>
    <property type="match status" value="1"/>
</dbReference>
<dbReference type="Gene3D" id="3.30.70.330">
    <property type="match status" value="2"/>
</dbReference>
<dbReference type="InterPro" id="IPR050502">
    <property type="entry name" value="Euk_RNA-bind_prot"/>
</dbReference>
<dbReference type="InterPro" id="IPR012677">
    <property type="entry name" value="Nucleotide-bd_a/b_plait_sf"/>
</dbReference>
<dbReference type="InterPro" id="IPR035979">
    <property type="entry name" value="RBD_domain_sf"/>
</dbReference>
<dbReference type="InterPro" id="IPR048289">
    <property type="entry name" value="RRM2_NsCP33-like"/>
</dbReference>
<dbReference type="InterPro" id="IPR000504">
    <property type="entry name" value="RRM_dom"/>
</dbReference>
<dbReference type="PANTHER" id="PTHR48025:SF3">
    <property type="entry name" value="31 KDA RIBONUCLEOPROTEIN, CHLOROPLASTIC-RELATED"/>
    <property type="match status" value="1"/>
</dbReference>
<dbReference type="PANTHER" id="PTHR48025">
    <property type="entry name" value="OS02G0815200 PROTEIN"/>
    <property type="match status" value="1"/>
</dbReference>
<dbReference type="Pfam" id="PF00076">
    <property type="entry name" value="RRM_1"/>
    <property type="match status" value="2"/>
</dbReference>
<dbReference type="SMART" id="SM00360">
    <property type="entry name" value="RRM"/>
    <property type="match status" value="2"/>
</dbReference>
<dbReference type="SUPFAM" id="SSF54928">
    <property type="entry name" value="RNA-binding domain, RBD"/>
    <property type="match status" value="2"/>
</dbReference>
<dbReference type="PROSITE" id="PS50102">
    <property type="entry name" value="RRM"/>
    <property type="match status" value="2"/>
</dbReference>
<sequence>MTSSVLTPSLKLLAMTNSSSSTLFCIPSIFNISSSESHRFNFSLSSRPVNLTLSLKSKTLRNSSPVVTFVSQTSNWAEEEEGEDGSIGGTSVTVDESFESEDGVGFPEPPEEAKLFVGNLPYDVDSQALAMLFEQAGTVEISEVIYNRDTDQSRGFGFVTMSTVEEAEKAVEKFNSFEVNGRRLTVNRAAPRGSRPERQPRVYDAAFRIYVGNLPWDVDSGRLERLFSEHGKVVDARVVSDRETGRSRGFGFVQMSNENEVNVAIAALDGQNLEGRAIKVNVAEERTRR</sequence>
<protein>
    <recommendedName>
        <fullName evidence="6">RNA-binding protein CP31B, chloroplastic</fullName>
    </recommendedName>
</protein>
<comment type="function">
    <text>Required for specific RNA editing events in chloroplasts and stabilizes specific chloroplast mRNAs (PubMed:19297624).</text>
</comment>
<comment type="subcellular location">
    <subcellularLocation>
        <location evidence="3">Plastid</location>
        <location evidence="3">Chloroplast</location>
    </subcellularLocation>
</comment>
<comment type="PTM">
    <text evidence="3">ADP-ribosylated by the Pseudomonas syringae type III effector HopU1. ADP-ribosylation reduces the ability of the protein to bind RNA.</text>
</comment>
<comment type="disruption phenotype">
    <text evidence="4">No visible phenotype under normal growth conditions, but mutant plants exhibit multiple specific editing defects in chloroplast transcripts.</text>
</comment>
<reference key="1">
    <citation type="journal article" date="2000" name="DNA Res.">
        <title>Structural analysis of Arabidopsis thaliana chromosome 5. X. Sequence features of the regions of 3,076,755 bp covered by sixty P1 and TAC clones.</title>
        <authorList>
            <person name="Sato S."/>
            <person name="Nakamura Y."/>
            <person name="Kaneko T."/>
            <person name="Katoh T."/>
            <person name="Asamizu E."/>
            <person name="Kotani H."/>
            <person name="Tabata S."/>
        </authorList>
    </citation>
    <scope>NUCLEOTIDE SEQUENCE [LARGE SCALE GENOMIC DNA]</scope>
    <source>
        <strain>cv. Columbia</strain>
    </source>
</reference>
<reference key="2">
    <citation type="journal article" date="2017" name="Plant J.">
        <title>Araport11: a complete reannotation of the Arabidopsis thaliana reference genome.</title>
        <authorList>
            <person name="Cheng C.Y."/>
            <person name="Krishnakumar V."/>
            <person name="Chan A.P."/>
            <person name="Thibaud-Nissen F."/>
            <person name="Schobel S."/>
            <person name="Town C.D."/>
        </authorList>
    </citation>
    <scope>GENOME REANNOTATION</scope>
    <source>
        <strain>cv. Columbia</strain>
    </source>
</reference>
<reference key="3">
    <citation type="journal article" date="2003" name="Science">
        <title>Empirical analysis of transcriptional activity in the Arabidopsis genome.</title>
        <authorList>
            <person name="Yamada K."/>
            <person name="Lim J."/>
            <person name="Dale J.M."/>
            <person name="Chen H."/>
            <person name="Shinn P."/>
            <person name="Palm C.J."/>
            <person name="Southwick A.M."/>
            <person name="Wu H.C."/>
            <person name="Kim C.J."/>
            <person name="Nguyen M."/>
            <person name="Pham P.K."/>
            <person name="Cheuk R.F."/>
            <person name="Karlin-Newmann G."/>
            <person name="Liu S.X."/>
            <person name="Lam B."/>
            <person name="Sakano H."/>
            <person name="Wu T."/>
            <person name="Yu G."/>
            <person name="Miranda M."/>
            <person name="Quach H.L."/>
            <person name="Tripp M."/>
            <person name="Chang C.H."/>
            <person name="Lee J.M."/>
            <person name="Toriumi M.J."/>
            <person name="Chan M.M."/>
            <person name="Tang C.C."/>
            <person name="Onodera C.S."/>
            <person name="Deng J.M."/>
            <person name="Akiyama K."/>
            <person name="Ansari Y."/>
            <person name="Arakawa T."/>
            <person name="Banh J."/>
            <person name="Banno F."/>
            <person name="Bowser L."/>
            <person name="Brooks S.Y."/>
            <person name="Carninci P."/>
            <person name="Chao Q."/>
            <person name="Choy N."/>
            <person name="Enju A."/>
            <person name="Goldsmith A.D."/>
            <person name="Gurjal M."/>
            <person name="Hansen N.F."/>
            <person name="Hayashizaki Y."/>
            <person name="Johnson-Hopson C."/>
            <person name="Hsuan V.W."/>
            <person name="Iida K."/>
            <person name="Karnes M."/>
            <person name="Khan S."/>
            <person name="Koesema E."/>
            <person name="Ishida J."/>
            <person name="Jiang P.X."/>
            <person name="Jones T."/>
            <person name="Kawai J."/>
            <person name="Kamiya A."/>
            <person name="Meyers C."/>
            <person name="Nakajima M."/>
            <person name="Narusaka M."/>
            <person name="Seki M."/>
            <person name="Sakurai T."/>
            <person name="Satou M."/>
            <person name="Tamse R."/>
            <person name="Vaysberg M."/>
            <person name="Wallender E.K."/>
            <person name="Wong C."/>
            <person name="Yamamura Y."/>
            <person name="Yuan S."/>
            <person name="Shinozaki K."/>
            <person name="Davis R.W."/>
            <person name="Theologis A."/>
            <person name="Ecker J.R."/>
        </authorList>
    </citation>
    <scope>NUCLEOTIDE SEQUENCE [LARGE SCALE MRNA]</scope>
    <source>
        <strain>cv. Columbia</strain>
    </source>
</reference>
<reference key="4">
    <citation type="journal article" date="2007" name="Nature">
        <title>A type III effector ADP-ribosylates RNA-binding proteins and quells plant immunity.</title>
        <authorList>
            <person name="Fu Z.Q."/>
            <person name="Guo M."/>
            <person name="Jeong B.R."/>
            <person name="Tian F."/>
            <person name="Elthon T.E."/>
            <person name="Cerny R.L."/>
            <person name="Staiger D."/>
            <person name="Alfano J.R."/>
        </authorList>
    </citation>
    <scope>IDENTIFICATION BY MASS SPECTROMETRY</scope>
    <scope>SUBCELLULAR LOCATION</scope>
    <scope>ADP-RIBOSYLATION</scope>
</reference>
<reference key="5">
    <citation type="journal article" date="2009" name="Proc. Natl. Acad. Sci. U.S.A.">
        <title>Chloroplast ribonucleoprotein CP31A is required for editing and stability of specific chloroplast mRNAs.</title>
        <authorList>
            <person name="Tillich M."/>
            <person name="Hardel S.L."/>
            <person name="Kupsch C."/>
            <person name="Armbruster U."/>
            <person name="Delannoy E."/>
            <person name="Gualberto J.M."/>
            <person name="Lehwark P."/>
            <person name="Leister D."/>
            <person name="Small I.D."/>
            <person name="Schmitz-Linneweber C."/>
        </authorList>
    </citation>
    <scope>FUNCTION</scope>
    <scope>DISRUPTION PHENOTYPE</scope>
</reference>
<feature type="transit peptide" description="Chloroplast" evidence="1">
    <location>
        <begin position="1"/>
        <end position="71"/>
    </location>
</feature>
<feature type="chain" id="PRO_0000431491" description="RNA-binding protein CP31B, chloroplastic" evidence="1">
    <location>
        <begin position="72"/>
        <end position="289"/>
    </location>
</feature>
<feature type="domain" description="RRM 1" evidence="2">
    <location>
        <begin position="113"/>
        <end position="191"/>
    </location>
</feature>
<feature type="domain" description="RRM 2" evidence="2">
    <location>
        <begin position="207"/>
        <end position="285"/>
    </location>
</feature>
<gene>
    <name evidence="5" type="primary">CP31B</name>
    <name evidence="7" type="ordered locus">At5g50250</name>
    <name evidence="8" type="ORF">K6A12.11</name>
</gene>
<proteinExistence type="evidence at protein level"/>